<reference key="1">
    <citation type="journal article" date="2003" name="Proc. Natl. Acad. Sci. U.S.A.">
        <title>The complete genome sequence of the carcinogenic bacterium Helicobacter hepaticus.</title>
        <authorList>
            <person name="Suerbaum S."/>
            <person name="Josenhans C."/>
            <person name="Sterzenbach T."/>
            <person name="Drescher B."/>
            <person name="Brandt P."/>
            <person name="Bell M."/>
            <person name="Droege M."/>
            <person name="Fartmann B."/>
            <person name="Fischer H.-P."/>
            <person name="Ge Z."/>
            <person name="Hoerster A."/>
            <person name="Holland R."/>
            <person name="Klein K."/>
            <person name="Koenig J."/>
            <person name="Macko L."/>
            <person name="Mendz G.L."/>
            <person name="Nyakatura G."/>
            <person name="Schauer D.B."/>
            <person name="Shen Z."/>
            <person name="Weber J."/>
            <person name="Frosch M."/>
            <person name="Fox J.G."/>
        </authorList>
    </citation>
    <scope>NUCLEOTIDE SEQUENCE [LARGE SCALE GENOMIC DNA]</scope>
    <source>
        <strain>ATCC 51449 / 3B1</strain>
    </source>
</reference>
<comment type="function">
    <text evidence="1">Located on the platform of the 30S subunit, it bridges several disparate RNA helices of the 16S rRNA. Forms part of the Shine-Dalgarno cleft in the 70S ribosome.</text>
</comment>
<comment type="subunit">
    <text evidence="1">Part of the 30S ribosomal subunit. Interacts with proteins S7 and S18. Binds to IF-3.</text>
</comment>
<comment type="similarity">
    <text evidence="1">Belongs to the universal ribosomal protein uS11 family.</text>
</comment>
<accession>Q7VGC1</accession>
<evidence type="ECO:0000255" key="1">
    <source>
        <dbReference type="HAMAP-Rule" id="MF_01310"/>
    </source>
</evidence>
<evidence type="ECO:0000305" key="2"/>
<sequence>MAKKSVTKKKNVKKNIARGIVCISASFNNTNVTITDEMGNVLCWATAGGLGFKGSKKSTPYAAQQAVESAMEKAKEHGIKEVGIKVQGPGSGRETAVKSVGAVEGIKVLWLKDITPLPHNGCRPPKRRRV</sequence>
<keyword id="KW-1185">Reference proteome</keyword>
<keyword id="KW-0687">Ribonucleoprotein</keyword>
<keyword id="KW-0689">Ribosomal protein</keyword>
<keyword id="KW-0694">RNA-binding</keyword>
<keyword id="KW-0699">rRNA-binding</keyword>
<name>RS11_HELHP</name>
<dbReference type="EMBL" id="AE017125">
    <property type="protein sequence ID" value="AAP77998.1"/>
    <property type="molecule type" value="Genomic_DNA"/>
</dbReference>
<dbReference type="RefSeq" id="WP_011116241.1">
    <property type="nucleotide sequence ID" value="NC_004917.1"/>
</dbReference>
<dbReference type="SMR" id="Q7VGC1"/>
<dbReference type="STRING" id="235279.HH_1401"/>
<dbReference type="KEGG" id="hhe:HH_1401"/>
<dbReference type="eggNOG" id="COG0100">
    <property type="taxonomic scope" value="Bacteria"/>
</dbReference>
<dbReference type="HOGENOM" id="CLU_072439_5_0_7"/>
<dbReference type="OrthoDB" id="9806415at2"/>
<dbReference type="Proteomes" id="UP000002495">
    <property type="component" value="Chromosome"/>
</dbReference>
<dbReference type="GO" id="GO:1990904">
    <property type="term" value="C:ribonucleoprotein complex"/>
    <property type="evidence" value="ECO:0007669"/>
    <property type="project" value="UniProtKB-KW"/>
</dbReference>
<dbReference type="GO" id="GO:0005840">
    <property type="term" value="C:ribosome"/>
    <property type="evidence" value="ECO:0007669"/>
    <property type="project" value="UniProtKB-KW"/>
</dbReference>
<dbReference type="GO" id="GO:0019843">
    <property type="term" value="F:rRNA binding"/>
    <property type="evidence" value="ECO:0007669"/>
    <property type="project" value="UniProtKB-UniRule"/>
</dbReference>
<dbReference type="GO" id="GO:0003735">
    <property type="term" value="F:structural constituent of ribosome"/>
    <property type="evidence" value="ECO:0007669"/>
    <property type="project" value="InterPro"/>
</dbReference>
<dbReference type="GO" id="GO:0006412">
    <property type="term" value="P:translation"/>
    <property type="evidence" value="ECO:0007669"/>
    <property type="project" value="UniProtKB-UniRule"/>
</dbReference>
<dbReference type="FunFam" id="3.30.420.80:FF:000001">
    <property type="entry name" value="30S ribosomal protein S11"/>
    <property type="match status" value="1"/>
</dbReference>
<dbReference type="Gene3D" id="3.30.420.80">
    <property type="entry name" value="Ribosomal protein S11"/>
    <property type="match status" value="1"/>
</dbReference>
<dbReference type="HAMAP" id="MF_01310">
    <property type="entry name" value="Ribosomal_uS11"/>
    <property type="match status" value="1"/>
</dbReference>
<dbReference type="InterPro" id="IPR001971">
    <property type="entry name" value="Ribosomal_uS11"/>
</dbReference>
<dbReference type="InterPro" id="IPR019981">
    <property type="entry name" value="Ribosomal_uS11_bac-type"/>
</dbReference>
<dbReference type="InterPro" id="IPR018102">
    <property type="entry name" value="Ribosomal_uS11_CS"/>
</dbReference>
<dbReference type="InterPro" id="IPR036967">
    <property type="entry name" value="Ribosomal_uS11_sf"/>
</dbReference>
<dbReference type="NCBIfam" id="NF003698">
    <property type="entry name" value="PRK05309.1"/>
    <property type="match status" value="1"/>
</dbReference>
<dbReference type="NCBIfam" id="TIGR03632">
    <property type="entry name" value="uS11_bact"/>
    <property type="match status" value="1"/>
</dbReference>
<dbReference type="PANTHER" id="PTHR11759">
    <property type="entry name" value="40S RIBOSOMAL PROTEIN S14/30S RIBOSOMAL PROTEIN S11"/>
    <property type="match status" value="1"/>
</dbReference>
<dbReference type="Pfam" id="PF00411">
    <property type="entry name" value="Ribosomal_S11"/>
    <property type="match status" value="1"/>
</dbReference>
<dbReference type="PIRSF" id="PIRSF002131">
    <property type="entry name" value="Ribosomal_S11"/>
    <property type="match status" value="1"/>
</dbReference>
<dbReference type="SUPFAM" id="SSF53137">
    <property type="entry name" value="Translational machinery components"/>
    <property type="match status" value="1"/>
</dbReference>
<dbReference type="PROSITE" id="PS00054">
    <property type="entry name" value="RIBOSOMAL_S11"/>
    <property type="match status" value="1"/>
</dbReference>
<proteinExistence type="inferred from homology"/>
<gene>
    <name evidence="1" type="primary">rpsK</name>
    <name type="ordered locus">HH_1401</name>
</gene>
<feature type="chain" id="PRO_0000123156" description="Small ribosomal subunit protein uS11">
    <location>
        <begin position="1"/>
        <end position="130"/>
    </location>
</feature>
<protein>
    <recommendedName>
        <fullName evidence="1">Small ribosomal subunit protein uS11</fullName>
    </recommendedName>
    <alternativeName>
        <fullName evidence="2">30S ribosomal protein S11</fullName>
    </alternativeName>
</protein>
<organism>
    <name type="scientific">Helicobacter hepaticus (strain ATCC 51449 / 3B1)</name>
    <dbReference type="NCBI Taxonomy" id="235279"/>
    <lineage>
        <taxon>Bacteria</taxon>
        <taxon>Pseudomonadati</taxon>
        <taxon>Campylobacterota</taxon>
        <taxon>Epsilonproteobacteria</taxon>
        <taxon>Campylobacterales</taxon>
        <taxon>Helicobacteraceae</taxon>
        <taxon>Helicobacter</taxon>
    </lineage>
</organism>